<proteinExistence type="inferred from homology"/>
<organism>
    <name type="scientific">Gnetum gnemon</name>
    <name type="common">Spanish joint-fir</name>
    <name type="synonym">Gnetum acutatum</name>
    <dbReference type="NCBI Taxonomy" id="3382"/>
    <lineage>
        <taxon>Eukaryota</taxon>
        <taxon>Viridiplantae</taxon>
        <taxon>Streptophyta</taxon>
        <taxon>Embryophyta</taxon>
        <taxon>Tracheophyta</taxon>
        <taxon>Spermatophyta</taxon>
        <taxon>Gnetopsida</taxon>
        <taxon>Gnetidae</taxon>
        <taxon>Gnetales</taxon>
        <taxon>Gnetaceae</taxon>
        <taxon>Gnetum</taxon>
    </lineage>
</organism>
<protein>
    <recommendedName>
        <fullName evidence="1">Protein PsbN</fullName>
    </recommendedName>
</protein>
<reference key="1">
    <citation type="journal article" date="2000" name="Am. J. Bot.">
        <title>Utility of 17 chloroplast genes for inferring the phylogeny of the basal angiosperms.</title>
        <authorList>
            <person name="Graham S.W."/>
            <person name="Olmstead R.G."/>
        </authorList>
    </citation>
    <scope>NUCLEOTIDE SEQUENCE [GENOMIC DNA]</scope>
</reference>
<keyword id="KW-0150">Chloroplast</keyword>
<keyword id="KW-0472">Membrane</keyword>
<keyword id="KW-0934">Plastid</keyword>
<keyword id="KW-0793">Thylakoid</keyword>
<keyword id="KW-0812">Transmembrane</keyword>
<keyword id="KW-1133">Transmembrane helix</keyword>
<accession>Q9GF82</accession>
<dbReference type="EMBL" id="AF123852">
    <property type="protein sequence ID" value="AAG26287.1"/>
    <property type="molecule type" value="Genomic_DNA"/>
</dbReference>
<dbReference type="RefSeq" id="YP_009117870.1">
    <property type="nucleotide sequence ID" value="NC_026301.1"/>
</dbReference>
<dbReference type="SMR" id="Q9GF82"/>
<dbReference type="GeneID" id="22975689"/>
<dbReference type="GO" id="GO:0009535">
    <property type="term" value="C:chloroplast thylakoid membrane"/>
    <property type="evidence" value="ECO:0007669"/>
    <property type="project" value="UniProtKB-SubCell"/>
</dbReference>
<dbReference type="GO" id="GO:0015979">
    <property type="term" value="P:photosynthesis"/>
    <property type="evidence" value="ECO:0007669"/>
    <property type="project" value="InterPro"/>
</dbReference>
<dbReference type="HAMAP" id="MF_00293">
    <property type="entry name" value="PSII_PsbN"/>
    <property type="match status" value="1"/>
</dbReference>
<dbReference type="InterPro" id="IPR003398">
    <property type="entry name" value="PSII_PsbN"/>
</dbReference>
<dbReference type="PANTHER" id="PTHR35326">
    <property type="entry name" value="PROTEIN PSBN"/>
    <property type="match status" value="1"/>
</dbReference>
<dbReference type="PANTHER" id="PTHR35326:SF3">
    <property type="entry name" value="PROTEIN PSBN"/>
    <property type="match status" value="1"/>
</dbReference>
<dbReference type="Pfam" id="PF02468">
    <property type="entry name" value="PsbN"/>
    <property type="match status" value="1"/>
</dbReference>
<evidence type="ECO:0000255" key="1">
    <source>
        <dbReference type="HAMAP-Rule" id="MF_00293"/>
    </source>
</evidence>
<feature type="chain" id="PRO_0000207901" description="Protein PsbN">
    <location>
        <begin position="1"/>
        <end position="43"/>
    </location>
</feature>
<feature type="transmembrane region" description="Helical" evidence="1">
    <location>
        <begin position="5"/>
        <end position="27"/>
    </location>
</feature>
<sequence>METANLVTISISCLLVSLTGYAIYTSFGRPSEQLKDPFEDHED</sequence>
<name>PSBN_GNEGN</name>
<gene>
    <name evidence="1" type="primary">psbN</name>
</gene>
<comment type="function">
    <text evidence="1">May play a role in photosystem I and II biogenesis.</text>
</comment>
<comment type="subcellular location">
    <subcellularLocation>
        <location evidence="1">Plastid</location>
        <location evidence="1">Chloroplast thylakoid membrane</location>
        <topology evidence="1">Single-pass membrane protein</topology>
    </subcellularLocation>
</comment>
<comment type="similarity">
    <text evidence="1">Belongs to the PsbN family.</text>
</comment>
<comment type="caution">
    <text evidence="1">Originally thought to be a component of PSII; based on experiments in Synechocystis, N.tabacum and barley, and its absence from PSII in T.elongatus and T.vulcanus, this is probably not true.</text>
</comment>
<geneLocation type="chloroplast"/>